<name>RUVC_SALAR</name>
<organism>
    <name type="scientific">Salmonella arizonae (strain ATCC BAA-731 / CDC346-86 / RSK2980)</name>
    <dbReference type="NCBI Taxonomy" id="41514"/>
    <lineage>
        <taxon>Bacteria</taxon>
        <taxon>Pseudomonadati</taxon>
        <taxon>Pseudomonadota</taxon>
        <taxon>Gammaproteobacteria</taxon>
        <taxon>Enterobacterales</taxon>
        <taxon>Enterobacteriaceae</taxon>
        <taxon>Salmonella</taxon>
    </lineage>
</organism>
<keyword id="KW-0963">Cytoplasm</keyword>
<keyword id="KW-0227">DNA damage</keyword>
<keyword id="KW-0233">DNA recombination</keyword>
<keyword id="KW-0234">DNA repair</keyword>
<keyword id="KW-0238">DNA-binding</keyword>
<keyword id="KW-0255">Endonuclease</keyword>
<keyword id="KW-0378">Hydrolase</keyword>
<keyword id="KW-0460">Magnesium</keyword>
<keyword id="KW-0479">Metal-binding</keyword>
<keyword id="KW-0540">Nuclease</keyword>
<keyword id="KW-1185">Reference proteome</keyword>
<protein>
    <recommendedName>
        <fullName evidence="1">Crossover junction endodeoxyribonuclease RuvC</fullName>
        <ecNumber evidence="1">3.1.21.10</ecNumber>
    </recommendedName>
    <alternativeName>
        <fullName evidence="1">Holliday junction nuclease RuvC</fullName>
    </alternativeName>
    <alternativeName>
        <fullName evidence="1">Holliday junction resolvase RuvC</fullName>
    </alternativeName>
</protein>
<evidence type="ECO:0000255" key="1">
    <source>
        <dbReference type="HAMAP-Rule" id="MF_00034"/>
    </source>
</evidence>
<dbReference type="EC" id="3.1.21.10" evidence="1"/>
<dbReference type="EMBL" id="CP000880">
    <property type="protein sequence ID" value="ABX20958.1"/>
    <property type="molecule type" value="Genomic_DNA"/>
</dbReference>
<dbReference type="SMR" id="A9MND5"/>
<dbReference type="STRING" id="41514.SARI_01050"/>
<dbReference type="KEGG" id="ses:SARI_01050"/>
<dbReference type="HOGENOM" id="CLU_091257_2_1_6"/>
<dbReference type="Proteomes" id="UP000002084">
    <property type="component" value="Chromosome"/>
</dbReference>
<dbReference type="GO" id="GO:0005737">
    <property type="term" value="C:cytoplasm"/>
    <property type="evidence" value="ECO:0007669"/>
    <property type="project" value="UniProtKB-SubCell"/>
</dbReference>
<dbReference type="GO" id="GO:0048476">
    <property type="term" value="C:Holliday junction resolvase complex"/>
    <property type="evidence" value="ECO:0007669"/>
    <property type="project" value="UniProtKB-UniRule"/>
</dbReference>
<dbReference type="GO" id="GO:0008821">
    <property type="term" value="F:crossover junction DNA endonuclease activity"/>
    <property type="evidence" value="ECO:0007669"/>
    <property type="project" value="UniProtKB-UniRule"/>
</dbReference>
<dbReference type="GO" id="GO:0003677">
    <property type="term" value="F:DNA binding"/>
    <property type="evidence" value="ECO:0007669"/>
    <property type="project" value="UniProtKB-KW"/>
</dbReference>
<dbReference type="GO" id="GO:0000287">
    <property type="term" value="F:magnesium ion binding"/>
    <property type="evidence" value="ECO:0007669"/>
    <property type="project" value="UniProtKB-UniRule"/>
</dbReference>
<dbReference type="GO" id="GO:0006310">
    <property type="term" value="P:DNA recombination"/>
    <property type="evidence" value="ECO:0007669"/>
    <property type="project" value="UniProtKB-UniRule"/>
</dbReference>
<dbReference type="GO" id="GO:0006281">
    <property type="term" value="P:DNA repair"/>
    <property type="evidence" value="ECO:0007669"/>
    <property type="project" value="UniProtKB-UniRule"/>
</dbReference>
<dbReference type="CDD" id="cd16962">
    <property type="entry name" value="RuvC"/>
    <property type="match status" value="1"/>
</dbReference>
<dbReference type="FunFam" id="3.30.420.10:FF:000002">
    <property type="entry name" value="Crossover junction endodeoxyribonuclease RuvC"/>
    <property type="match status" value="1"/>
</dbReference>
<dbReference type="Gene3D" id="3.30.420.10">
    <property type="entry name" value="Ribonuclease H-like superfamily/Ribonuclease H"/>
    <property type="match status" value="1"/>
</dbReference>
<dbReference type="HAMAP" id="MF_00034">
    <property type="entry name" value="RuvC"/>
    <property type="match status" value="1"/>
</dbReference>
<dbReference type="InterPro" id="IPR012337">
    <property type="entry name" value="RNaseH-like_sf"/>
</dbReference>
<dbReference type="InterPro" id="IPR036397">
    <property type="entry name" value="RNaseH_sf"/>
</dbReference>
<dbReference type="InterPro" id="IPR020563">
    <property type="entry name" value="X-over_junc_endoDNase_Mg_BS"/>
</dbReference>
<dbReference type="InterPro" id="IPR002176">
    <property type="entry name" value="X-over_junc_endoDNase_RuvC"/>
</dbReference>
<dbReference type="NCBIfam" id="NF000711">
    <property type="entry name" value="PRK00039.2-1"/>
    <property type="match status" value="1"/>
</dbReference>
<dbReference type="NCBIfam" id="TIGR00228">
    <property type="entry name" value="ruvC"/>
    <property type="match status" value="1"/>
</dbReference>
<dbReference type="PANTHER" id="PTHR30194">
    <property type="entry name" value="CROSSOVER JUNCTION ENDODEOXYRIBONUCLEASE RUVC"/>
    <property type="match status" value="1"/>
</dbReference>
<dbReference type="PANTHER" id="PTHR30194:SF3">
    <property type="entry name" value="CROSSOVER JUNCTION ENDODEOXYRIBONUCLEASE RUVC"/>
    <property type="match status" value="1"/>
</dbReference>
<dbReference type="Pfam" id="PF02075">
    <property type="entry name" value="RuvC"/>
    <property type="match status" value="1"/>
</dbReference>
<dbReference type="PRINTS" id="PR00696">
    <property type="entry name" value="RSOLVASERUVC"/>
</dbReference>
<dbReference type="SUPFAM" id="SSF53098">
    <property type="entry name" value="Ribonuclease H-like"/>
    <property type="match status" value="1"/>
</dbReference>
<dbReference type="PROSITE" id="PS01321">
    <property type="entry name" value="RUVC"/>
    <property type="match status" value="1"/>
</dbReference>
<gene>
    <name evidence="1" type="primary">ruvC</name>
    <name type="ordered locus">SARI_01050</name>
</gene>
<reference key="1">
    <citation type="submission" date="2007-11" db="EMBL/GenBank/DDBJ databases">
        <authorList>
            <consortium name="The Salmonella enterica serovar Arizonae Genome Sequencing Project"/>
            <person name="McClelland M."/>
            <person name="Sanderson E.K."/>
            <person name="Porwollik S."/>
            <person name="Spieth J."/>
            <person name="Clifton W.S."/>
            <person name="Fulton R."/>
            <person name="Chunyan W."/>
            <person name="Wollam A."/>
            <person name="Shah N."/>
            <person name="Pepin K."/>
            <person name="Bhonagiri V."/>
            <person name="Nash W."/>
            <person name="Johnson M."/>
            <person name="Thiruvilangam P."/>
            <person name="Wilson R."/>
        </authorList>
    </citation>
    <scope>NUCLEOTIDE SEQUENCE [LARGE SCALE GENOMIC DNA]</scope>
    <source>
        <strain>ATCC BAA-731 / CDC346-86 / RSK2980</strain>
    </source>
</reference>
<feature type="chain" id="PRO_1000074497" description="Crossover junction endodeoxyribonuclease RuvC">
    <location>
        <begin position="1"/>
        <end position="173"/>
    </location>
</feature>
<feature type="active site" evidence="1">
    <location>
        <position position="8"/>
    </location>
</feature>
<feature type="active site" evidence="1">
    <location>
        <position position="67"/>
    </location>
</feature>
<feature type="active site" evidence="1">
    <location>
        <position position="139"/>
    </location>
</feature>
<feature type="binding site" evidence="1">
    <location>
        <position position="8"/>
    </location>
    <ligand>
        <name>Mg(2+)</name>
        <dbReference type="ChEBI" id="CHEBI:18420"/>
        <label>1</label>
    </ligand>
</feature>
<feature type="binding site" evidence="1">
    <location>
        <position position="67"/>
    </location>
    <ligand>
        <name>Mg(2+)</name>
        <dbReference type="ChEBI" id="CHEBI:18420"/>
        <label>2</label>
    </ligand>
</feature>
<feature type="binding site" evidence="1">
    <location>
        <position position="139"/>
    </location>
    <ligand>
        <name>Mg(2+)</name>
        <dbReference type="ChEBI" id="CHEBI:18420"/>
        <label>1</label>
    </ligand>
</feature>
<proteinExistence type="inferred from homology"/>
<accession>A9MND5</accession>
<comment type="function">
    <text evidence="1">The RuvA-RuvB-RuvC complex processes Holliday junction (HJ) DNA during genetic recombination and DNA repair. Endonuclease that resolves HJ intermediates. Cleaves cruciform DNA by making single-stranded nicks across the HJ at symmetrical positions within the homologous arms, yielding a 5'-phosphate and a 3'-hydroxyl group; requires a central core of homology in the junction. The consensus cleavage sequence is 5'-(A/T)TT(C/G)-3'. Cleavage occurs on the 3'-side of the TT dinucleotide at the point of strand exchange. HJ branch migration catalyzed by RuvA-RuvB allows RuvC to scan DNA until it finds its consensus sequence, where it cleaves and resolves the cruciform DNA.</text>
</comment>
<comment type="catalytic activity">
    <reaction evidence="1">
        <text>Endonucleolytic cleavage at a junction such as a reciprocal single-stranded crossover between two homologous DNA duplexes (Holliday junction).</text>
        <dbReference type="EC" id="3.1.21.10"/>
    </reaction>
</comment>
<comment type="cofactor">
    <cofactor evidence="1">
        <name>Mg(2+)</name>
        <dbReference type="ChEBI" id="CHEBI:18420"/>
    </cofactor>
    <text evidence="1">Binds 2 Mg(2+) ion per subunit.</text>
</comment>
<comment type="subunit">
    <text evidence="1">Homodimer which binds Holliday junction (HJ) DNA. The HJ becomes 2-fold symmetrical on binding to RuvC with unstacked arms; it has a different conformation from HJ DNA in complex with RuvA. In the full resolvosome a probable DNA-RuvA(4)-RuvB(12)-RuvC(2) complex forms which resolves the HJ.</text>
</comment>
<comment type="subcellular location">
    <subcellularLocation>
        <location evidence="1">Cytoplasm</location>
    </subcellularLocation>
</comment>
<comment type="similarity">
    <text evidence="1">Belongs to the RuvC family.</text>
</comment>
<sequence length="173" mass="18803">MAIILGIDPGSRITGYGVIRQVGRQLTYLGSGCIRTKVDDLPSRLKLIYAGVTEIITQFQPDYFAIEQVFMAKNADSALKLGQARGVAIVAAVNRELPVFEYAARQVKQTVVGIGSAEKSQVQHMVRTLLKLPANPQADAADALAIAITHCHVSQNAMQMSESRLNLARGRLR</sequence>